<organism>
    <name type="scientific">Bacillus anthracis (strain CDC 684 / NRRL 3495)</name>
    <dbReference type="NCBI Taxonomy" id="568206"/>
    <lineage>
        <taxon>Bacteria</taxon>
        <taxon>Bacillati</taxon>
        <taxon>Bacillota</taxon>
        <taxon>Bacilli</taxon>
        <taxon>Bacillales</taxon>
        <taxon>Bacillaceae</taxon>
        <taxon>Bacillus</taxon>
        <taxon>Bacillus cereus group</taxon>
    </lineage>
</organism>
<evidence type="ECO:0000255" key="1">
    <source>
        <dbReference type="HAMAP-Rule" id="MF_00549"/>
    </source>
</evidence>
<keyword id="KW-0456">Lyase</keyword>
<dbReference type="EC" id="4.2.3.3" evidence="1"/>
<dbReference type="EMBL" id="CP001215">
    <property type="protein sequence ID" value="ACP13581.1"/>
    <property type="molecule type" value="Genomic_DNA"/>
</dbReference>
<dbReference type="RefSeq" id="WP_000684757.1">
    <property type="nucleotide sequence ID" value="NC_012581.1"/>
</dbReference>
<dbReference type="SMR" id="C3L8Q6"/>
<dbReference type="GeneID" id="45021528"/>
<dbReference type="KEGG" id="bah:BAMEG_3039"/>
<dbReference type="HOGENOM" id="CLU_120420_1_0_9"/>
<dbReference type="GO" id="GO:0005829">
    <property type="term" value="C:cytosol"/>
    <property type="evidence" value="ECO:0007669"/>
    <property type="project" value="TreeGrafter"/>
</dbReference>
<dbReference type="GO" id="GO:0008929">
    <property type="term" value="F:methylglyoxal synthase activity"/>
    <property type="evidence" value="ECO:0007669"/>
    <property type="project" value="UniProtKB-UniRule"/>
</dbReference>
<dbReference type="GO" id="GO:0019242">
    <property type="term" value="P:methylglyoxal biosynthetic process"/>
    <property type="evidence" value="ECO:0007669"/>
    <property type="project" value="UniProtKB-UniRule"/>
</dbReference>
<dbReference type="CDD" id="cd01422">
    <property type="entry name" value="MGS"/>
    <property type="match status" value="1"/>
</dbReference>
<dbReference type="FunFam" id="3.40.50.1380:FF:000006">
    <property type="entry name" value="Methylglyoxal synthase"/>
    <property type="match status" value="1"/>
</dbReference>
<dbReference type="Gene3D" id="3.40.50.1380">
    <property type="entry name" value="Methylglyoxal synthase-like domain"/>
    <property type="match status" value="1"/>
</dbReference>
<dbReference type="HAMAP" id="MF_00549">
    <property type="entry name" value="Methylglyoxal_synth"/>
    <property type="match status" value="1"/>
</dbReference>
<dbReference type="InterPro" id="IPR004363">
    <property type="entry name" value="Methylgl_synth"/>
</dbReference>
<dbReference type="InterPro" id="IPR018148">
    <property type="entry name" value="Methylglyoxal_synth_AS"/>
</dbReference>
<dbReference type="InterPro" id="IPR011607">
    <property type="entry name" value="MGS-like_dom"/>
</dbReference>
<dbReference type="InterPro" id="IPR036914">
    <property type="entry name" value="MGS-like_dom_sf"/>
</dbReference>
<dbReference type="NCBIfam" id="TIGR00160">
    <property type="entry name" value="MGSA"/>
    <property type="match status" value="1"/>
</dbReference>
<dbReference type="NCBIfam" id="NF003559">
    <property type="entry name" value="PRK05234.1"/>
    <property type="match status" value="1"/>
</dbReference>
<dbReference type="PANTHER" id="PTHR30492">
    <property type="entry name" value="METHYLGLYOXAL SYNTHASE"/>
    <property type="match status" value="1"/>
</dbReference>
<dbReference type="PANTHER" id="PTHR30492:SF0">
    <property type="entry name" value="METHYLGLYOXAL SYNTHASE"/>
    <property type="match status" value="1"/>
</dbReference>
<dbReference type="Pfam" id="PF02142">
    <property type="entry name" value="MGS"/>
    <property type="match status" value="1"/>
</dbReference>
<dbReference type="PIRSF" id="PIRSF006614">
    <property type="entry name" value="Methylglyox_syn"/>
    <property type="match status" value="1"/>
</dbReference>
<dbReference type="SMART" id="SM00851">
    <property type="entry name" value="MGS"/>
    <property type="match status" value="1"/>
</dbReference>
<dbReference type="SUPFAM" id="SSF52335">
    <property type="entry name" value="Methylglyoxal synthase-like"/>
    <property type="match status" value="1"/>
</dbReference>
<dbReference type="PROSITE" id="PS01335">
    <property type="entry name" value="METHYLGLYOXAL_SYNTH"/>
    <property type="match status" value="1"/>
</dbReference>
<dbReference type="PROSITE" id="PS51855">
    <property type="entry name" value="MGS"/>
    <property type="match status" value="1"/>
</dbReference>
<sequence length="131" mass="14700">MKIALIAHDKKKEDMVSFAYAYKPIFEQHELFATGTTGLRIMEATGLVVTRYQSGPLGGDQEIGAMIAKNDLDMVIFFRDPLTAQPHEPDVNALLRLCDVYAIPLATNMASAEMLMHALERGDLDYRKLRK</sequence>
<feature type="chain" id="PRO_1000146618" description="Methylglyoxal synthase">
    <location>
        <begin position="1"/>
        <end position="131"/>
    </location>
</feature>
<feature type="domain" description="MGS-like" evidence="1">
    <location>
        <begin position="1"/>
        <end position="131"/>
    </location>
</feature>
<feature type="active site" description="Proton donor/acceptor" evidence="1">
    <location>
        <position position="60"/>
    </location>
</feature>
<feature type="binding site" evidence="1">
    <location>
        <position position="8"/>
    </location>
    <ligand>
        <name>substrate</name>
    </ligand>
</feature>
<feature type="binding site" evidence="1">
    <location>
        <position position="12"/>
    </location>
    <ligand>
        <name>substrate</name>
    </ligand>
</feature>
<feature type="binding site" evidence="1">
    <location>
        <begin position="34"/>
        <end position="37"/>
    </location>
    <ligand>
        <name>substrate</name>
    </ligand>
</feature>
<feature type="binding site" evidence="1">
    <location>
        <begin position="54"/>
        <end position="55"/>
    </location>
    <ligand>
        <name>substrate</name>
    </ligand>
</feature>
<feature type="binding site" evidence="1">
    <location>
        <position position="87"/>
    </location>
    <ligand>
        <name>substrate</name>
    </ligand>
</feature>
<reference key="1">
    <citation type="submission" date="2008-10" db="EMBL/GenBank/DDBJ databases">
        <title>Genome sequence of Bacillus anthracis str. CDC 684.</title>
        <authorList>
            <person name="Dodson R.J."/>
            <person name="Munk A.C."/>
            <person name="Brettin T."/>
            <person name="Bruce D."/>
            <person name="Detter C."/>
            <person name="Tapia R."/>
            <person name="Han C."/>
            <person name="Sutton G."/>
            <person name="Sims D."/>
        </authorList>
    </citation>
    <scope>NUCLEOTIDE SEQUENCE [LARGE SCALE GENOMIC DNA]</scope>
    <source>
        <strain>CDC 684 / NRRL 3495</strain>
    </source>
</reference>
<name>MGSA_BACAC</name>
<proteinExistence type="inferred from homology"/>
<accession>C3L8Q6</accession>
<protein>
    <recommendedName>
        <fullName evidence="1">Methylglyoxal synthase</fullName>
        <shortName evidence="1">MGS</shortName>
        <ecNumber evidence="1">4.2.3.3</ecNumber>
    </recommendedName>
</protein>
<comment type="function">
    <text evidence="1">Catalyzes the formation of methylglyoxal from dihydroxyacetone phosphate.</text>
</comment>
<comment type="catalytic activity">
    <reaction evidence="1">
        <text>dihydroxyacetone phosphate = methylglyoxal + phosphate</text>
        <dbReference type="Rhea" id="RHEA:17937"/>
        <dbReference type="ChEBI" id="CHEBI:17158"/>
        <dbReference type="ChEBI" id="CHEBI:43474"/>
        <dbReference type="ChEBI" id="CHEBI:57642"/>
        <dbReference type="EC" id="4.2.3.3"/>
    </reaction>
</comment>
<comment type="similarity">
    <text evidence="1">Belongs to the methylglyoxal synthase family.</text>
</comment>
<gene>
    <name evidence="1" type="primary">mgsA</name>
    <name type="ordered locus">BAMEG_3039</name>
</gene>